<organism>
    <name type="scientific">Felis catus</name>
    <name type="common">Cat</name>
    <name type="synonym">Felis silvestris catus</name>
    <dbReference type="NCBI Taxonomy" id="9685"/>
    <lineage>
        <taxon>Eukaryota</taxon>
        <taxon>Metazoa</taxon>
        <taxon>Chordata</taxon>
        <taxon>Craniata</taxon>
        <taxon>Vertebrata</taxon>
        <taxon>Euteleostomi</taxon>
        <taxon>Mammalia</taxon>
        <taxon>Eutheria</taxon>
        <taxon>Laurasiatheria</taxon>
        <taxon>Carnivora</taxon>
        <taxon>Feliformia</taxon>
        <taxon>Felidae</taxon>
        <taxon>Felinae</taxon>
        <taxon>Felis</taxon>
    </lineage>
</organism>
<evidence type="ECO:0000250" key="1"/>
<evidence type="ECO:0000250" key="2">
    <source>
        <dbReference type="UniProtKB" id="P04401"/>
    </source>
</evidence>
<evidence type="ECO:0000250" key="3">
    <source>
        <dbReference type="UniProtKB" id="P05113"/>
    </source>
</evidence>
<evidence type="ECO:0000255" key="4"/>
<evidence type="ECO:0000305" key="5"/>
<reference key="1">
    <citation type="journal article" date="1998" name="Am. J. Vet. Res.">
        <title>Sequence and structural analysis of feline interleukin-5 cDNA.</title>
        <authorList>
            <person name="Padrid P.A."/>
            <person name="Qin Y."/>
            <person name="Wells T.N.C."/>
            <person name="Solway J."/>
            <person name="Camoretti-Mercado B."/>
        </authorList>
    </citation>
    <scope>NUCLEOTIDE SEQUENCE [MRNA]</scope>
</reference>
<reference key="2">
    <citation type="journal article" date="1999" name="Clin. Diagn. Lab. Immunol.">
        <title>Cytokine mRNA expression in lesions in cats with chronic gingivostomatitis.</title>
        <authorList>
            <person name="Harley R."/>
            <person name="Helps C.R."/>
            <person name="Harbour D.A."/>
            <person name="Gruffydd-Jones T.J."/>
            <person name="Day M.J."/>
        </authorList>
    </citation>
    <scope>NUCLEOTIDE SEQUENCE [MRNA] OF 12-128</scope>
</reference>
<comment type="function">
    <text evidence="2 3">Homodimeric cytokine expressed predominantly by T-lymphocytes and NK cells that plays an important role in the survival, differentiation, and chemotaxis of eosinophils. Also acts on activated and resting B-cells to induce immunoglobulin production, growth, and differentiation (By similarity). Mechanistically, exerts its biological effects through a receptor composed of IL5RA subunit and the cytokine receptor common subunit beta/CSF2RB. Binding to the receptor leads to activation of various kinases including LYN, SYK and JAK2 and thereby propagates signals through the RAS-MAPK and JAK-STAT5 pathways respectively (By similarity).</text>
</comment>
<comment type="subunit">
    <text evidence="2 3">Homodimer; disulfide-linked. Interacts with IL5RA. Interacts with CSF2RB.</text>
</comment>
<comment type="subcellular location">
    <subcellularLocation>
        <location evidence="2">Secreted</location>
    </subcellularLocation>
</comment>
<comment type="similarity">
    <text evidence="5">Belongs to the IL-5 family.</text>
</comment>
<feature type="signal peptide" evidence="1">
    <location>
        <begin position="1"/>
        <end position="19"/>
    </location>
</feature>
<feature type="chain" id="PRO_0000015558" description="Interleukin-5">
    <location>
        <begin position="20"/>
        <end position="134"/>
    </location>
</feature>
<feature type="glycosylation site" description="N-linked (GlcNAc...) asparagine" evidence="4">
    <location>
        <position position="76"/>
    </location>
</feature>
<feature type="glycosylation site" description="N-linked (GlcNAc...) asparagine" evidence="4">
    <location>
        <position position="90"/>
    </location>
</feature>
<feature type="disulfide bond" description="Interchain (with C-105)" evidence="3">
    <location>
        <position position="63"/>
    </location>
</feature>
<feature type="disulfide bond" description="Interchain (with C-63)" evidence="3">
    <location>
        <position position="105"/>
    </location>
</feature>
<feature type="sequence conflict" description="In Ref. 2; AAC05752." evidence="5" ref="2">
    <original>KC</original>
    <variation>NF</variation>
    <location>
        <begin position="104"/>
        <end position="105"/>
    </location>
</feature>
<feature type="sequence conflict" description="In Ref. 2." evidence="5" ref="2">
    <original>ERWR</original>
    <variation>KKWK</variation>
    <location>
        <begin position="108"/>
        <end position="111"/>
    </location>
</feature>
<feature type="sequence conflict" description="In Ref. 2." evidence="5" ref="2">
    <original>K</original>
    <variation>N</variation>
    <location>
        <position position="114"/>
    </location>
</feature>
<feature type="sequence conflict" description="In Ref. 2." evidence="5" ref="2">
    <original>D</original>
    <variation>N</variation>
    <location>
        <position position="117"/>
    </location>
</feature>
<feature type="sequence conflict" description="In Ref. 2; AAC05752." evidence="5" ref="2">
    <original>V</original>
    <variation>F</variation>
    <location>
        <position position="121"/>
    </location>
</feature>
<feature type="sequence conflict" description="In Ref. 2." evidence="5" ref="2">
    <original>VI</original>
    <variation>LL</variation>
    <location>
        <begin position="125"/>
        <end position="126"/>
    </location>
</feature>
<dbReference type="EMBL" id="AF025436">
    <property type="protein sequence ID" value="AAC64505.1"/>
    <property type="molecule type" value="mRNA"/>
</dbReference>
<dbReference type="EMBL" id="AF051372">
    <property type="protein sequence ID" value="AAC05752.1"/>
    <property type="molecule type" value="mRNA"/>
</dbReference>
<dbReference type="RefSeq" id="NP_001009845.2">
    <property type="nucleotide sequence ID" value="NM_001009845.2"/>
</dbReference>
<dbReference type="SMR" id="O77515"/>
<dbReference type="FunCoup" id="O77515">
    <property type="interactions" value="64"/>
</dbReference>
<dbReference type="STRING" id="9685.ENSFCAP00000058090"/>
<dbReference type="GlyCosmos" id="O77515">
    <property type="glycosylation" value="2 sites, No reported glycans"/>
</dbReference>
<dbReference type="PaxDb" id="9685-ENSFCAP00000012354"/>
<dbReference type="Ensembl" id="ENSFCAT00000072428.1">
    <property type="protein sequence ID" value="ENSFCAP00000058090.1"/>
    <property type="gene ID" value="ENSFCAG00000013321.5"/>
</dbReference>
<dbReference type="GeneID" id="493803"/>
<dbReference type="KEGG" id="fca:493803"/>
<dbReference type="CTD" id="3567"/>
<dbReference type="VGNC" id="VGNC:102233">
    <property type="gene designation" value="IL5"/>
</dbReference>
<dbReference type="eggNOG" id="ENOG502RWD8">
    <property type="taxonomic scope" value="Eukaryota"/>
</dbReference>
<dbReference type="GeneTree" id="ENSGT00390000016991"/>
<dbReference type="HOGENOM" id="CLU_156269_0_0_1"/>
<dbReference type="InParanoid" id="O77515"/>
<dbReference type="OMA" id="VPTHKNH"/>
<dbReference type="OrthoDB" id="9446172at2759"/>
<dbReference type="TreeFam" id="TF338422"/>
<dbReference type="Proteomes" id="UP000011712">
    <property type="component" value="Chromosome A1"/>
</dbReference>
<dbReference type="Bgee" id="ENSFCAG00000013321">
    <property type="expression patterns" value="Expressed in testis"/>
</dbReference>
<dbReference type="GO" id="GO:0005615">
    <property type="term" value="C:extracellular space"/>
    <property type="evidence" value="ECO:0000318"/>
    <property type="project" value="GO_Central"/>
</dbReference>
<dbReference type="GO" id="GO:0005125">
    <property type="term" value="F:cytokine activity"/>
    <property type="evidence" value="ECO:0000318"/>
    <property type="project" value="GO_Central"/>
</dbReference>
<dbReference type="GO" id="GO:0008083">
    <property type="term" value="F:growth factor activity"/>
    <property type="evidence" value="ECO:0007669"/>
    <property type="project" value="UniProtKB-KW"/>
</dbReference>
<dbReference type="GO" id="GO:0005137">
    <property type="term" value="F:interleukin-5 receptor binding"/>
    <property type="evidence" value="ECO:0007669"/>
    <property type="project" value="InterPro"/>
</dbReference>
<dbReference type="GO" id="GO:0006955">
    <property type="term" value="P:immune response"/>
    <property type="evidence" value="ECO:0007669"/>
    <property type="project" value="InterPro"/>
</dbReference>
<dbReference type="GO" id="GO:0038043">
    <property type="term" value="P:interleukin-5-mediated signaling pathway"/>
    <property type="evidence" value="ECO:0000318"/>
    <property type="project" value="GO_Central"/>
</dbReference>
<dbReference type="GO" id="GO:0045893">
    <property type="term" value="P:positive regulation of DNA-templated transcription"/>
    <property type="evidence" value="ECO:0007669"/>
    <property type="project" value="Ensembl"/>
</dbReference>
<dbReference type="GO" id="GO:0002639">
    <property type="term" value="P:positive regulation of immunoglobulin production"/>
    <property type="evidence" value="ECO:0007669"/>
    <property type="project" value="Ensembl"/>
</dbReference>
<dbReference type="GO" id="GO:0071803">
    <property type="term" value="P:positive regulation of podosome assembly"/>
    <property type="evidence" value="ECO:0007669"/>
    <property type="project" value="Ensembl"/>
</dbReference>
<dbReference type="Gene3D" id="1.20.1250.10">
    <property type="match status" value="1"/>
</dbReference>
<dbReference type="InterPro" id="IPR009079">
    <property type="entry name" value="4_helix_cytokine-like_core"/>
</dbReference>
<dbReference type="InterPro" id="IPR000186">
    <property type="entry name" value="IL-5"/>
</dbReference>
<dbReference type="PANTHER" id="PTHR48491">
    <property type="entry name" value="INTERLEUKIN-5"/>
    <property type="match status" value="1"/>
</dbReference>
<dbReference type="PANTHER" id="PTHR48491:SF1">
    <property type="entry name" value="INTERLEUKIN-5"/>
    <property type="match status" value="1"/>
</dbReference>
<dbReference type="Pfam" id="PF02025">
    <property type="entry name" value="IL5"/>
    <property type="match status" value="1"/>
</dbReference>
<dbReference type="PRINTS" id="PR00432">
    <property type="entry name" value="INTERLEUKIN5"/>
</dbReference>
<dbReference type="SUPFAM" id="SSF47266">
    <property type="entry name" value="4-helical cytokines"/>
    <property type="match status" value="1"/>
</dbReference>
<name>IL5_FELCA</name>
<keyword id="KW-0202">Cytokine</keyword>
<keyword id="KW-1015">Disulfide bond</keyword>
<keyword id="KW-0325">Glycoprotein</keyword>
<keyword id="KW-0339">Growth factor</keyword>
<keyword id="KW-1185">Reference proteome</keyword>
<keyword id="KW-0964">Secreted</keyword>
<keyword id="KW-0732">Signal</keyword>
<protein>
    <recommendedName>
        <fullName>Interleukin-5</fullName>
        <shortName>IL-5</shortName>
    </recommendedName>
    <alternativeName>
        <fullName>Eosinophil differentiation factor</fullName>
    </alternativeName>
    <alternativeName>
        <fullName>T-cell replacing factor</fullName>
        <shortName>TRF</shortName>
    </alternativeName>
</protein>
<proteinExistence type="evidence at transcript level"/>
<sequence>MRMLLHLSLLALGAAYVSAIAVQSPMNRLVAETLALLSTHRTLLIGDGNLMIPTPEHNNHQLCIEEVFQGIDTLKNRTVPGDAVEKLFRNLSLIKEHIDRQKKKCGGERWRVKKFLDYLQVFLGVINTEWTMES</sequence>
<accession>O77515</accession>
<accession>O62740</accession>
<gene>
    <name type="primary">IL5</name>
</gene>